<feature type="chain" id="PRO_0000124316" description="Small ribosomal subunit protein uS7">
    <location>
        <begin position="1"/>
        <end position="156"/>
    </location>
</feature>
<comment type="function">
    <text evidence="1">One of the primary rRNA binding proteins, it binds directly to 16S rRNA where it nucleates assembly of the head domain of the 30S subunit. Is located at the subunit interface close to the decoding center, probably blocks exit of the E-site tRNA.</text>
</comment>
<comment type="subunit">
    <text evidence="1">Part of the 30S ribosomal subunit. Contacts proteins S9 and S11.</text>
</comment>
<comment type="similarity">
    <text evidence="1">Belongs to the universal ribosomal protein uS7 family.</text>
</comment>
<accession>Q6LVC2</accession>
<sequence>MPRRRVIGQRKILSDPKFGSDLLAKFVNILMVDGKKSTAEKIVYTALDTMTERSGEECLSVFEKALENVRPAVEVKSRRVGGSTYQVPVEVRPVRRNALAMRWLVEAARKRGEKSMAQRLAGEMLDAADNKGTAVKKREDVHRMADANKAFAHYRW</sequence>
<name>RS7_PHOPR</name>
<evidence type="ECO:0000255" key="1">
    <source>
        <dbReference type="HAMAP-Rule" id="MF_00480"/>
    </source>
</evidence>
<evidence type="ECO:0000305" key="2"/>
<dbReference type="EMBL" id="CR378663">
    <property type="protein sequence ID" value="CAG18753.1"/>
    <property type="molecule type" value="Genomic_DNA"/>
</dbReference>
<dbReference type="RefSeq" id="WP_006233899.1">
    <property type="nucleotide sequence ID" value="NC_006370.1"/>
</dbReference>
<dbReference type="SMR" id="Q6LVC2"/>
<dbReference type="STRING" id="298386.PBPRA0314"/>
<dbReference type="KEGG" id="ppr:PBPRA0314"/>
<dbReference type="eggNOG" id="COG0049">
    <property type="taxonomic scope" value="Bacteria"/>
</dbReference>
<dbReference type="HOGENOM" id="CLU_072226_1_1_6"/>
<dbReference type="Proteomes" id="UP000000593">
    <property type="component" value="Chromosome 1"/>
</dbReference>
<dbReference type="GO" id="GO:0015935">
    <property type="term" value="C:small ribosomal subunit"/>
    <property type="evidence" value="ECO:0007669"/>
    <property type="project" value="InterPro"/>
</dbReference>
<dbReference type="GO" id="GO:0019843">
    <property type="term" value="F:rRNA binding"/>
    <property type="evidence" value="ECO:0007669"/>
    <property type="project" value="UniProtKB-UniRule"/>
</dbReference>
<dbReference type="GO" id="GO:0003735">
    <property type="term" value="F:structural constituent of ribosome"/>
    <property type="evidence" value="ECO:0007669"/>
    <property type="project" value="InterPro"/>
</dbReference>
<dbReference type="GO" id="GO:0000049">
    <property type="term" value="F:tRNA binding"/>
    <property type="evidence" value="ECO:0007669"/>
    <property type="project" value="UniProtKB-UniRule"/>
</dbReference>
<dbReference type="GO" id="GO:0006412">
    <property type="term" value="P:translation"/>
    <property type="evidence" value="ECO:0007669"/>
    <property type="project" value="UniProtKB-UniRule"/>
</dbReference>
<dbReference type="CDD" id="cd14869">
    <property type="entry name" value="uS7_Bacteria"/>
    <property type="match status" value="1"/>
</dbReference>
<dbReference type="FunFam" id="1.10.455.10:FF:000001">
    <property type="entry name" value="30S ribosomal protein S7"/>
    <property type="match status" value="1"/>
</dbReference>
<dbReference type="Gene3D" id="1.10.455.10">
    <property type="entry name" value="Ribosomal protein S7 domain"/>
    <property type="match status" value="1"/>
</dbReference>
<dbReference type="HAMAP" id="MF_00480_B">
    <property type="entry name" value="Ribosomal_uS7_B"/>
    <property type="match status" value="1"/>
</dbReference>
<dbReference type="InterPro" id="IPR000235">
    <property type="entry name" value="Ribosomal_uS7"/>
</dbReference>
<dbReference type="InterPro" id="IPR005717">
    <property type="entry name" value="Ribosomal_uS7_bac/org-type"/>
</dbReference>
<dbReference type="InterPro" id="IPR020606">
    <property type="entry name" value="Ribosomal_uS7_CS"/>
</dbReference>
<dbReference type="InterPro" id="IPR023798">
    <property type="entry name" value="Ribosomal_uS7_dom"/>
</dbReference>
<dbReference type="InterPro" id="IPR036823">
    <property type="entry name" value="Ribosomal_uS7_dom_sf"/>
</dbReference>
<dbReference type="NCBIfam" id="TIGR01029">
    <property type="entry name" value="rpsG_bact"/>
    <property type="match status" value="1"/>
</dbReference>
<dbReference type="PANTHER" id="PTHR11205">
    <property type="entry name" value="RIBOSOMAL PROTEIN S7"/>
    <property type="match status" value="1"/>
</dbReference>
<dbReference type="Pfam" id="PF00177">
    <property type="entry name" value="Ribosomal_S7"/>
    <property type="match status" value="1"/>
</dbReference>
<dbReference type="PIRSF" id="PIRSF002122">
    <property type="entry name" value="RPS7p_RPS7a_RPS5e_RPS7o"/>
    <property type="match status" value="1"/>
</dbReference>
<dbReference type="SUPFAM" id="SSF47973">
    <property type="entry name" value="Ribosomal protein S7"/>
    <property type="match status" value="1"/>
</dbReference>
<dbReference type="PROSITE" id="PS00052">
    <property type="entry name" value="RIBOSOMAL_S7"/>
    <property type="match status" value="1"/>
</dbReference>
<proteinExistence type="inferred from homology"/>
<gene>
    <name evidence="1" type="primary">rpsG</name>
    <name type="ordered locus">PBPRA0314</name>
</gene>
<protein>
    <recommendedName>
        <fullName evidence="1">Small ribosomal subunit protein uS7</fullName>
    </recommendedName>
    <alternativeName>
        <fullName evidence="2">30S ribosomal protein S7</fullName>
    </alternativeName>
</protein>
<reference key="1">
    <citation type="journal article" date="2005" name="Science">
        <title>Life at depth: Photobacterium profundum genome sequence and expression analysis.</title>
        <authorList>
            <person name="Vezzi A."/>
            <person name="Campanaro S."/>
            <person name="D'Angelo M."/>
            <person name="Simonato F."/>
            <person name="Vitulo N."/>
            <person name="Lauro F.M."/>
            <person name="Cestaro A."/>
            <person name="Malacrida G."/>
            <person name="Simionati B."/>
            <person name="Cannata N."/>
            <person name="Romualdi C."/>
            <person name="Bartlett D.H."/>
            <person name="Valle G."/>
        </authorList>
    </citation>
    <scope>NUCLEOTIDE SEQUENCE [LARGE SCALE GENOMIC DNA]</scope>
    <source>
        <strain>ATCC BAA-1253 / SS9</strain>
    </source>
</reference>
<keyword id="KW-1185">Reference proteome</keyword>
<keyword id="KW-0687">Ribonucleoprotein</keyword>
<keyword id="KW-0689">Ribosomal protein</keyword>
<keyword id="KW-0694">RNA-binding</keyword>
<keyword id="KW-0699">rRNA-binding</keyword>
<keyword id="KW-0820">tRNA-binding</keyword>
<organism>
    <name type="scientific">Photobacterium profundum (strain SS9)</name>
    <dbReference type="NCBI Taxonomy" id="298386"/>
    <lineage>
        <taxon>Bacteria</taxon>
        <taxon>Pseudomonadati</taxon>
        <taxon>Pseudomonadota</taxon>
        <taxon>Gammaproteobacteria</taxon>
        <taxon>Vibrionales</taxon>
        <taxon>Vibrionaceae</taxon>
        <taxon>Photobacterium</taxon>
    </lineage>
</organism>